<sequence length="161" mass="17831">MAKVLKKPDLTNPALRAKLKKGMGHNYYGEPAWPNDLLYIFPVVIMGTIALVIGLAVMDPAMVGEPADPFATPLEILPEWYLYPTFQIFRVVPNKLLGVLMNASIPLGLMLIPFIESVNKFQNPFRRPVAMTVFLFGTLVTLWLGIGAAFPLDKSLTLGLF</sequence>
<reference key="1">
    <citation type="journal article" date="2002" name="DNA Res.">
        <title>Complete genome structure of the thermophilic cyanobacterium Thermosynechococcus elongatus BP-1.</title>
        <authorList>
            <person name="Nakamura Y."/>
            <person name="Kaneko T."/>
            <person name="Sato S."/>
            <person name="Ikeuchi M."/>
            <person name="Katoh H."/>
            <person name="Sasamoto S."/>
            <person name="Watanabe A."/>
            <person name="Iriguchi M."/>
            <person name="Kawashima K."/>
            <person name="Kimura T."/>
            <person name="Kishida Y."/>
            <person name="Kiyokawa C."/>
            <person name="Kohara M."/>
            <person name="Matsumoto M."/>
            <person name="Matsuno A."/>
            <person name="Nakazaki N."/>
            <person name="Shimpo S."/>
            <person name="Sugimoto M."/>
            <person name="Takeuchi C."/>
            <person name="Yamada M."/>
            <person name="Tabata S."/>
        </authorList>
    </citation>
    <scope>NUCLEOTIDE SEQUENCE [LARGE SCALE GENOMIC DNA]</scope>
    <source>
        <strain>NIES-2133 / IAM M-273 / BP-1</strain>
    </source>
</reference>
<gene>
    <name evidence="1" type="primary">petD</name>
    <name type="ordered locus">tlr0797</name>
</gene>
<evidence type="ECO:0000255" key="1">
    <source>
        <dbReference type="HAMAP-Rule" id="MF_01344"/>
    </source>
</evidence>
<protein>
    <recommendedName>
        <fullName evidence="1">Cytochrome b6-f complex subunit 4</fullName>
    </recommendedName>
    <alternativeName>
        <fullName evidence="1">17 kDa polypeptide</fullName>
    </alternativeName>
</protein>
<proteinExistence type="inferred from homology"/>
<accession>P0C8N3</accession>
<accession>Q79V52</accession>
<accession>Q9X9S8</accession>
<keyword id="KW-0249">Electron transport</keyword>
<keyword id="KW-0472">Membrane</keyword>
<keyword id="KW-0602">Photosynthesis</keyword>
<keyword id="KW-1185">Reference proteome</keyword>
<keyword id="KW-0793">Thylakoid</keyword>
<keyword id="KW-0812">Transmembrane</keyword>
<keyword id="KW-1133">Transmembrane helix</keyword>
<keyword id="KW-0813">Transport</keyword>
<comment type="function">
    <text evidence="1">Component of the cytochrome b6-f complex, which mediates electron transfer between photosystem II (PSII) and photosystem I (PSI), cyclic electron flow around PSI, and state transitions.</text>
</comment>
<comment type="subunit">
    <text evidence="1">The 4 large subunits of the cytochrome b6-f complex are cytochrome b6, subunit IV (17 kDa polypeptide, PetD), cytochrome f and the Rieske protein, while the 4 small subunits are PetG, PetL, PetM and PetN. The complex functions as a dimer.</text>
</comment>
<comment type="subcellular location">
    <subcellularLocation>
        <location evidence="1">Cellular thylakoid membrane</location>
        <topology evidence="1">Multi-pass membrane protein</topology>
    </subcellularLocation>
</comment>
<comment type="similarity">
    <text evidence="1">Belongs to the cytochrome b family. PetD subfamily.</text>
</comment>
<feature type="chain" id="PRO_0000361569" description="Cytochrome b6-f complex subunit 4">
    <location>
        <begin position="1"/>
        <end position="161"/>
    </location>
</feature>
<feature type="transmembrane region" description="Helical" evidence="1">
    <location>
        <begin position="37"/>
        <end position="57"/>
    </location>
</feature>
<feature type="transmembrane region" description="Helical" evidence="1">
    <location>
        <begin position="96"/>
        <end position="116"/>
    </location>
</feature>
<feature type="transmembrane region" description="Helical" evidence="1">
    <location>
        <begin position="130"/>
        <end position="150"/>
    </location>
</feature>
<name>PETD_THEVB</name>
<organism>
    <name type="scientific">Thermosynechococcus vestitus (strain NIES-2133 / IAM M-273 / BP-1)</name>
    <dbReference type="NCBI Taxonomy" id="197221"/>
    <lineage>
        <taxon>Bacteria</taxon>
        <taxon>Bacillati</taxon>
        <taxon>Cyanobacteriota</taxon>
        <taxon>Cyanophyceae</taxon>
        <taxon>Acaryochloridales</taxon>
        <taxon>Thermosynechococcaceae</taxon>
        <taxon>Thermosynechococcus</taxon>
    </lineage>
</organism>
<dbReference type="EMBL" id="BA000039">
    <property type="protein sequence ID" value="BAC08348.1"/>
    <property type="molecule type" value="Genomic_DNA"/>
</dbReference>
<dbReference type="RefSeq" id="NP_681586.1">
    <property type="nucleotide sequence ID" value="NC_004113.1"/>
</dbReference>
<dbReference type="RefSeq" id="WP_011056640.1">
    <property type="nucleotide sequence ID" value="NC_004113.1"/>
</dbReference>
<dbReference type="SMR" id="P0C8N3"/>
<dbReference type="STRING" id="197221.gene:10747388"/>
<dbReference type="EnsemblBacteria" id="BAC08348">
    <property type="protein sequence ID" value="BAC08348"/>
    <property type="gene ID" value="BAC08348"/>
</dbReference>
<dbReference type="KEGG" id="tel:tlr0797"/>
<dbReference type="PATRIC" id="fig|197221.4.peg.837"/>
<dbReference type="eggNOG" id="COG1290">
    <property type="taxonomic scope" value="Bacteria"/>
</dbReference>
<dbReference type="Proteomes" id="UP000000440">
    <property type="component" value="Chromosome"/>
</dbReference>
<dbReference type="GO" id="GO:0031676">
    <property type="term" value="C:plasma membrane-derived thylakoid membrane"/>
    <property type="evidence" value="ECO:0007669"/>
    <property type="project" value="UniProtKB-SubCell"/>
</dbReference>
<dbReference type="GO" id="GO:0045158">
    <property type="term" value="F:electron transporter, transferring electrons within cytochrome b6/f complex of photosystem II activity"/>
    <property type="evidence" value="ECO:0007669"/>
    <property type="project" value="UniProtKB-UniRule"/>
</dbReference>
<dbReference type="GO" id="GO:0045156">
    <property type="term" value="F:electron transporter, transferring electrons within the cyclic electron transport pathway of photosynthesis activity"/>
    <property type="evidence" value="ECO:0007669"/>
    <property type="project" value="InterPro"/>
</dbReference>
<dbReference type="GO" id="GO:0016491">
    <property type="term" value="F:oxidoreductase activity"/>
    <property type="evidence" value="ECO:0007669"/>
    <property type="project" value="InterPro"/>
</dbReference>
<dbReference type="GO" id="GO:0009767">
    <property type="term" value="P:photosynthetic electron transport chain"/>
    <property type="evidence" value="ECO:0007669"/>
    <property type="project" value="InterPro"/>
</dbReference>
<dbReference type="CDD" id="cd00290">
    <property type="entry name" value="cytochrome_b_C"/>
    <property type="match status" value="1"/>
</dbReference>
<dbReference type="FunFam" id="1.10.287.980:FF:000001">
    <property type="entry name" value="Cytochrome b6-f complex subunit 4"/>
    <property type="match status" value="1"/>
</dbReference>
<dbReference type="FunFam" id="1.20.5.510:FF:000002">
    <property type="entry name" value="Cytochrome b6-f complex subunit 4"/>
    <property type="match status" value="1"/>
</dbReference>
<dbReference type="Gene3D" id="1.10.287.980">
    <property type="entry name" value="plastocyanin oxidoreductase"/>
    <property type="match status" value="1"/>
</dbReference>
<dbReference type="Gene3D" id="1.20.5.510">
    <property type="entry name" value="Single helix bin"/>
    <property type="match status" value="1"/>
</dbReference>
<dbReference type="HAMAP" id="MF_01344">
    <property type="entry name" value="Cytb6_f_subIV"/>
    <property type="match status" value="1"/>
</dbReference>
<dbReference type="InterPro" id="IPR005798">
    <property type="entry name" value="Cyt_b/b6_C"/>
</dbReference>
<dbReference type="InterPro" id="IPR036150">
    <property type="entry name" value="Cyt_b/b6_C_sf"/>
</dbReference>
<dbReference type="InterPro" id="IPR005870">
    <property type="entry name" value="Cyt_b6/f_cplx_suIV"/>
</dbReference>
<dbReference type="InterPro" id="IPR048260">
    <property type="entry name" value="Cytochrome_b_C_euk/bac"/>
</dbReference>
<dbReference type="NCBIfam" id="TIGR01156">
    <property type="entry name" value="cytb6_f_IV"/>
    <property type="match status" value="1"/>
</dbReference>
<dbReference type="PANTHER" id="PTHR19271">
    <property type="entry name" value="CYTOCHROME B"/>
    <property type="match status" value="1"/>
</dbReference>
<dbReference type="PANTHER" id="PTHR19271:SF40">
    <property type="entry name" value="CYTOCHROME B"/>
    <property type="match status" value="1"/>
</dbReference>
<dbReference type="Pfam" id="PF00032">
    <property type="entry name" value="Cytochrom_B_C"/>
    <property type="match status" value="1"/>
</dbReference>
<dbReference type="PIRSF" id="PIRSF000033">
    <property type="entry name" value="B6f_17K"/>
    <property type="match status" value="1"/>
</dbReference>
<dbReference type="SUPFAM" id="SSF81648">
    <property type="entry name" value="a domain/subunit of cytochrome bc1 complex (Ubiquinol-cytochrome c reductase)"/>
    <property type="match status" value="1"/>
</dbReference>
<dbReference type="PROSITE" id="PS51003">
    <property type="entry name" value="CYTB_CTER"/>
    <property type="match status" value="1"/>
</dbReference>